<proteinExistence type="evidence at protein level"/>
<reference key="1">
    <citation type="journal article" date="1987" name="Mol. Microbiol.">
        <title>Nucleotide sequence, regulation and functional analysis of the papC gene required for cell surface localization of Pap pili of uropathogenic Escherichia coli.</title>
        <authorList>
            <person name="Norgren M."/>
            <person name="Baga M."/>
            <person name="Tennent J.M."/>
            <person name="Normark S."/>
        </authorList>
    </citation>
    <scope>NUCLEOTIDE SEQUENCE [GENOMIC DNA]</scope>
    <source>
        <strain>ATCC 700336 / J96 / UPEC</strain>
    </source>
</reference>
<reference key="2">
    <citation type="journal article" date="1992" name="Mol. Microbiol.">
        <title>Horizontal gene transfer of the Escherichia coli pap and prs pili operons as a mechanism for the development of tissue-specific adhesive properties.</title>
        <authorList>
            <person name="Marklund B.-I."/>
            <person name="Tennent J.M."/>
            <person name="Garcia E."/>
            <person name="Hamers A."/>
            <person name="Baga M."/>
            <person name="Lindberg F."/>
            <person name="Gaastra W."/>
            <person name="Normark S."/>
        </authorList>
    </citation>
    <scope>NUCLEOTIDE SEQUENCE [GENOMIC DNA]</scope>
    <source>
        <strain>ATCC 700336 / J96 / UPEC</strain>
    </source>
</reference>
<reference key="3">
    <citation type="journal article" date="2002" name="J. Bacteriol.">
        <title>Bacterial outer membrane ushers contain distinct targeting and assembly domains for pilus biogenesis.</title>
        <authorList>
            <person name="Thanassi D.G."/>
            <person name="Stathopoulos C."/>
            <person name="Dodson K."/>
            <person name="Geiger D."/>
            <person name="Hultgren S.J."/>
        </authorList>
    </citation>
    <scope>NUCLEOTIDE SEQUENCE [GENOMIC DNA] OF 517-543</scope>
</reference>
<reference key="4">
    <citation type="journal article" date="1989" name="J. Bacteriol.">
        <title>PapD, a periplasmic transport protein in P-pilus biogenesis.</title>
        <authorList>
            <person name="Lindberg F."/>
            <person name="Tennent J.M."/>
            <person name="Hultgren S.J."/>
            <person name="Lund B."/>
            <person name="Normark S."/>
        </authorList>
    </citation>
    <scope>NUCLEOTIDE SEQUENCE [GENOMIC DNA] OF 720-836</scope>
</reference>
<reference key="5">
    <citation type="journal article" date="1994" name="J. Biol. Chem.">
        <title>Chaperone-assisted self-assembly of pili independent of cellular energy.</title>
        <authorList>
            <person name="Jacob-Dubuisson F."/>
            <person name="Striker R."/>
            <person name="Hultgren S.J."/>
        </authorList>
    </citation>
    <scope>CHARACTERIZATION</scope>
</reference>
<reference key="6">
    <citation type="journal article" date="1998" name="Proc. Natl. Acad. Sci. U.S.A.">
        <title>The PapC usher forms an oligomeric channel: implications for pilus biogenesis across the outer membrane.</title>
        <authorList>
            <person name="Thanassi D.G."/>
            <person name="Saulino E.T."/>
            <person name="Lombardo M.J."/>
            <person name="Roth R."/>
            <person name="Heuser J."/>
            <person name="Hultgren S.J."/>
        </authorList>
    </citation>
    <scope>SUBUNIT</scope>
</reference>
<name>PAPC_ECOLX</name>
<evidence type="ECO:0000255" key="1"/>
<evidence type="ECO:0000305" key="2"/>
<evidence type="ECO:0007829" key="3">
    <source>
        <dbReference type="PDB" id="2KT6"/>
    </source>
</evidence>
<evidence type="ECO:0007829" key="4">
    <source>
        <dbReference type="PDB" id="3FIP"/>
    </source>
</evidence>
<organism>
    <name type="scientific">Escherichia coli</name>
    <dbReference type="NCBI Taxonomy" id="562"/>
    <lineage>
        <taxon>Bacteria</taxon>
        <taxon>Pseudomonadati</taxon>
        <taxon>Pseudomonadota</taxon>
        <taxon>Gammaproteobacteria</taxon>
        <taxon>Enterobacterales</taxon>
        <taxon>Enterobacteriaceae</taxon>
        <taxon>Escherichia</taxon>
    </lineage>
</organism>
<accession>P07110</accession>
<accession>Q8RNL0</accession>
<protein>
    <recommendedName>
        <fullName>Outer membrane usher protein PapC</fullName>
    </recommendedName>
</protein>
<feature type="signal peptide">
    <location>
        <begin position="1"/>
        <end position="24"/>
    </location>
</feature>
<feature type="chain" id="PRO_0000009323" description="Outer membrane usher protein PapC">
    <location>
        <begin position="25"/>
        <end position="836"/>
    </location>
</feature>
<feature type="disulfide bond" evidence="1">
    <location>
        <begin position="814"/>
        <end position="832"/>
    </location>
</feature>
<feature type="sequence conflict" description="In Ref. 1 and 2." evidence="2" ref="1 2">
    <original>YSRQTYWDIRKTDYYTVSVNRYFNVFG</original>
    <variation>SENIKVAVDAHRIIVRFPYVPVCLTAV</variation>
    <location>
        <begin position="517"/>
        <end position="543"/>
    </location>
</feature>
<feature type="strand" evidence="4">
    <location>
        <begin position="174"/>
        <end position="185"/>
    </location>
</feature>
<feature type="strand" evidence="4">
    <location>
        <begin position="192"/>
        <end position="203"/>
    </location>
</feature>
<feature type="strand" evidence="4">
    <location>
        <begin position="208"/>
        <end position="215"/>
    </location>
</feature>
<feature type="strand" evidence="4">
    <location>
        <begin position="218"/>
        <end position="221"/>
    </location>
</feature>
<feature type="strand" evidence="4">
    <location>
        <begin position="228"/>
        <end position="231"/>
    </location>
</feature>
<feature type="strand" evidence="4">
    <location>
        <begin position="234"/>
        <end position="244"/>
    </location>
</feature>
<feature type="turn" evidence="4">
    <location>
        <begin position="245"/>
        <end position="248"/>
    </location>
</feature>
<feature type="strand" evidence="4">
    <location>
        <begin position="249"/>
        <end position="257"/>
    </location>
</feature>
<feature type="strand" evidence="4">
    <location>
        <begin position="261"/>
        <end position="263"/>
    </location>
</feature>
<feature type="strand" evidence="4">
    <location>
        <begin position="267"/>
        <end position="275"/>
    </location>
</feature>
<feature type="strand" evidence="4">
    <location>
        <begin position="293"/>
        <end position="298"/>
    </location>
</feature>
<feature type="strand" evidence="4">
    <location>
        <begin position="300"/>
        <end position="305"/>
    </location>
</feature>
<feature type="strand" evidence="4">
    <location>
        <begin position="308"/>
        <end position="314"/>
    </location>
</feature>
<feature type="strand" evidence="4">
    <location>
        <begin position="317"/>
        <end position="320"/>
    </location>
</feature>
<feature type="strand" evidence="4">
    <location>
        <begin position="331"/>
        <end position="338"/>
    </location>
</feature>
<feature type="strand" evidence="4">
    <location>
        <begin position="347"/>
        <end position="350"/>
    </location>
</feature>
<feature type="strand" evidence="4">
    <location>
        <begin position="363"/>
        <end position="371"/>
    </location>
</feature>
<feature type="strand" evidence="4">
    <location>
        <begin position="383"/>
        <end position="392"/>
    </location>
</feature>
<feature type="strand" evidence="4">
    <location>
        <begin position="395"/>
        <end position="406"/>
    </location>
</feature>
<feature type="strand" evidence="4">
    <location>
        <begin position="409"/>
        <end position="419"/>
    </location>
</feature>
<feature type="strand" evidence="4">
    <location>
        <begin position="421"/>
        <end position="423"/>
    </location>
</feature>
<feature type="strand" evidence="4">
    <location>
        <begin position="425"/>
        <end position="436"/>
    </location>
</feature>
<feature type="strand" evidence="4">
    <location>
        <begin position="442"/>
        <end position="452"/>
    </location>
</feature>
<feature type="strand" evidence="4">
    <location>
        <begin position="464"/>
        <end position="471"/>
    </location>
</feature>
<feature type="helix" evidence="4">
    <location>
        <begin position="478"/>
        <end position="485"/>
    </location>
</feature>
<feature type="strand" evidence="4">
    <location>
        <begin position="494"/>
        <end position="505"/>
    </location>
</feature>
<feature type="strand" evidence="4">
    <location>
        <begin position="512"/>
        <end position="525"/>
    </location>
</feature>
<feature type="strand" evidence="4">
    <location>
        <begin position="528"/>
        <end position="537"/>
    </location>
</feature>
<feature type="strand" evidence="4">
    <location>
        <begin position="548"/>
        <end position="554"/>
    </location>
</feature>
<feature type="strand" evidence="4">
    <location>
        <begin position="565"/>
        <end position="572"/>
    </location>
</feature>
<feature type="strand" evidence="4">
    <location>
        <begin position="579"/>
        <end position="584"/>
    </location>
</feature>
<feature type="strand" evidence="4">
    <location>
        <begin position="590"/>
        <end position="599"/>
    </location>
</feature>
<feature type="strand" evidence="4">
    <location>
        <begin position="606"/>
        <end position="615"/>
    </location>
</feature>
<feature type="strand" evidence="4">
    <location>
        <begin position="622"/>
        <end position="632"/>
    </location>
</feature>
<feature type="strand" evidence="4">
    <location>
        <begin position="634"/>
        <end position="645"/>
    </location>
</feature>
<feature type="strand" evidence="3">
    <location>
        <begin position="758"/>
        <end position="764"/>
    </location>
</feature>
<feature type="strand" evidence="3">
    <location>
        <begin position="775"/>
        <end position="777"/>
    </location>
</feature>
<feature type="strand" evidence="3">
    <location>
        <begin position="783"/>
        <end position="787"/>
    </location>
</feature>
<feature type="strand" evidence="3">
    <location>
        <begin position="792"/>
        <end position="796"/>
    </location>
</feature>
<feature type="strand" evidence="3">
    <location>
        <begin position="806"/>
        <end position="810"/>
    </location>
</feature>
<feature type="strand" evidence="3">
    <location>
        <begin position="814"/>
        <end position="818"/>
    </location>
</feature>
<feature type="strand" evidence="3">
    <location>
        <begin position="824"/>
        <end position="834"/>
    </location>
</feature>
<comment type="function">
    <text>Involved in the export and assembly of pili subunits across the outer membrane. Forms a hexameric ring-shaped pore in the outer bacterial membrane. The 2 nanometer-diameter pore allows the passage of the thin tip fibrillum. As for the rod, it probably unwinds into linear fibers which would therefore be narrow enough to pass through the pore.</text>
</comment>
<comment type="interaction">
    <interactant intactId="EBI-15770957">
        <id>P07110</id>
    </interactant>
    <interactant intactId="EBI-15770957">
        <id>P07110</id>
        <label>papC</label>
    </interactant>
    <organismsDiffer>false</organismsDiffer>
    <experiments>3</experiments>
</comment>
<comment type="subcellular location">
    <subcellularLocation>
        <location>Cell outer membrane</location>
        <topology>Multi-pass membrane protein</topology>
    </subcellularLocation>
</comment>
<comment type="similarity">
    <text evidence="2">Belongs to the fimbrial export usher family.</text>
</comment>
<gene>
    <name type="primary">papC</name>
</gene>
<sequence length="836" mass="91509">MKDRIPFAVNNITCVILLSLFCNAASAVEFNTDVLDAADKKNIDFTRFSEAGYVLPGQYLLDVIVNGQSISPASLQISFVEPALSGDKAEKKLPQACLTSDMVRLMGLTAESLDKVVYWHDGQCADFHGLPGVDIRPDTGAGVLRINMPQAWLEYSDATWLPPSRWDDGIPGLMLDYNLNGTVSRNYQGGDSHQFSYNGTVGGNLGPWRLRADYQGSQEQSRYNGEKTTNRNFTWSRFYLFRAIPRWRANLTLGENNINSDIFRSWSYTGASLESDDRMLPPRLRGYAPQITGIAETNARVVVSQQGRVLYDSMVPAGPFSIQDLDSSVRGRLDVEVIEQNGRKKTFQVDTASVPYLTRPGQVRYKLVSGRSRGYGHETEGPVFATGEASWGLSNQWSLYGGAVLAGDYNALAAGAGWDLGVPGTLSADITQSVARIEGERTFQGKSWRLSYSKRFDNADADITFAGYRFSERNYMTMEQYLNARYRNDYSSREKEMYTVTLNKNVADWNTSFNLQYSRQTYWDIRKTDYYTVSVNRYFNVFGLQGVAVGLSASRSKYLGRDNDSAYLRISVPLGTGTASYSGSMSNDRYVNMAGYTDTFNDGLDSYSLNAGLNSGGGLTSQRQINAYYSHRSPLANLSANIASLQKGYTSFGVSASGGATITGKGAALHAGGMSGGTRLLVDTDGVGGVPVDGGQVVTNRWGTGVVTDISSYYRNTTSVDLKRLPDDVEATRSVVESALTEGAIGYRKFSVLKGKRLFAILRLADGSQPPFGASVTSEKGRELGMVADEGLAWLSGVTPGETLSVNWDGKIQCQVNVPETAISDQQLLLPCTPQK</sequence>
<keyword id="KW-0002">3D-structure</keyword>
<keyword id="KW-0998">Cell outer membrane</keyword>
<keyword id="KW-1015">Disulfide bond</keyword>
<keyword id="KW-1029">Fimbrium biogenesis</keyword>
<keyword id="KW-0472">Membrane</keyword>
<keyword id="KW-0732">Signal</keyword>
<keyword id="KW-0812">Transmembrane</keyword>
<keyword id="KW-1134">Transmembrane beta strand</keyword>
<keyword id="KW-0813">Transport</keyword>
<dbReference type="EMBL" id="Y00529">
    <property type="protein sequence ID" value="CAA68588.1"/>
    <property type="molecule type" value="Genomic_DNA"/>
</dbReference>
<dbReference type="EMBL" id="X61239">
    <property type="protein sequence ID" value="CAA43564.1"/>
    <property type="molecule type" value="Genomic_DNA"/>
</dbReference>
<dbReference type="EMBL" id="AF481883">
    <property type="protein sequence ID" value="AAL89688.1"/>
    <property type="molecule type" value="Genomic_DNA"/>
</dbReference>
<dbReference type="PIR" id="S25218">
    <property type="entry name" value="S25218"/>
</dbReference>
<dbReference type="PDB" id="2KT6">
    <property type="method" value="NMR"/>
    <property type="chains" value="A=752-836"/>
</dbReference>
<dbReference type="PDB" id="2VQI">
    <property type="method" value="X-ray"/>
    <property type="resolution" value="3.20 A"/>
    <property type="chains" value="A/B=157-667"/>
</dbReference>
<dbReference type="PDB" id="3FIP">
    <property type="method" value="X-ray"/>
    <property type="resolution" value="3.15 A"/>
    <property type="chains" value="A/B=171-650"/>
</dbReference>
<dbReference type="PDB" id="6CD2">
    <property type="method" value="X-ray"/>
    <property type="resolution" value="3.70 A"/>
    <property type="chains" value="C=28-836"/>
</dbReference>
<dbReference type="PDB" id="7LHG">
    <property type="method" value="EM"/>
    <property type="resolution" value="3.80 A"/>
    <property type="chains" value="C=28-836"/>
</dbReference>
<dbReference type="PDB" id="7LHH">
    <property type="method" value="EM"/>
    <property type="resolution" value="7.20 A"/>
    <property type="chains" value="C=28-836"/>
</dbReference>
<dbReference type="PDB" id="7LHI">
    <property type="method" value="EM"/>
    <property type="resolution" value="7.60 A"/>
    <property type="chains" value="C=28-836"/>
</dbReference>
<dbReference type="PDBsum" id="2KT6"/>
<dbReference type="PDBsum" id="2VQI"/>
<dbReference type="PDBsum" id="3FIP"/>
<dbReference type="PDBsum" id="6CD2"/>
<dbReference type="PDBsum" id="7LHG"/>
<dbReference type="PDBsum" id="7LHH"/>
<dbReference type="PDBsum" id="7LHI"/>
<dbReference type="SMR" id="P07110"/>
<dbReference type="DIP" id="DIP-60749N"/>
<dbReference type="DrugBank" id="DB04233">
    <property type="generic name" value="(Hydroxyethyloxy)Tri(Ethyloxy)Octane"/>
</dbReference>
<dbReference type="DrugBank" id="DB04147">
    <property type="generic name" value="Dodecyldimethylamine N-oxide"/>
</dbReference>
<dbReference type="TCDB" id="1.B.11.2.1">
    <property type="family name" value="the outer membrane fimbrial usher porin (fup) family"/>
</dbReference>
<dbReference type="EvolutionaryTrace" id="P07110"/>
<dbReference type="GO" id="GO:0009279">
    <property type="term" value="C:cell outer membrane"/>
    <property type="evidence" value="ECO:0007669"/>
    <property type="project" value="UniProtKB-SubCell"/>
</dbReference>
<dbReference type="GO" id="GO:0015473">
    <property type="term" value="F:fimbrial usher porin activity"/>
    <property type="evidence" value="ECO:0007669"/>
    <property type="project" value="InterPro"/>
</dbReference>
<dbReference type="GO" id="GO:0042802">
    <property type="term" value="F:identical protein binding"/>
    <property type="evidence" value="ECO:0000353"/>
    <property type="project" value="IntAct"/>
</dbReference>
<dbReference type="GO" id="GO:0009297">
    <property type="term" value="P:pilus assembly"/>
    <property type="evidence" value="ECO:0007669"/>
    <property type="project" value="InterPro"/>
</dbReference>
<dbReference type="FunFam" id="2.60.40.2070:FF:000003">
    <property type="entry name" value="Putative fimbrial outer membrane usher"/>
    <property type="match status" value="1"/>
</dbReference>
<dbReference type="Gene3D" id="2.60.40.2070">
    <property type="match status" value="1"/>
</dbReference>
<dbReference type="Gene3D" id="2.60.40.3110">
    <property type="match status" value="1"/>
</dbReference>
<dbReference type="Gene3D" id="3.10.20.410">
    <property type="match status" value="1"/>
</dbReference>
<dbReference type="Gene3D" id="2.60.40.2610">
    <property type="entry name" value="Outer membrane usher protein FimD, plug domain"/>
    <property type="match status" value="1"/>
</dbReference>
<dbReference type="InterPro" id="IPR000015">
    <property type="entry name" value="Fimb_usher"/>
</dbReference>
<dbReference type="InterPro" id="IPR018030">
    <property type="entry name" value="Fimbrial_membr_usher_CS"/>
</dbReference>
<dbReference type="InterPro" id="IPR042186">
    <property type="entry name" value="FimD_plug_dom"/>
</dbReference>
<dbReference type="InterPro" id="IPR025949">
    <property type="entry name" value="PapC-like_C"/>
</dbReference>
<dbReference type="InterPro" id="IPR043142">
    <property type="entry name" value="PapC-like_C_sf"/>
</dbReference>
<dbReference type="InterPro" id="IPR025885">
    <property type="entry name" value="PapC_N"/>
</dbReference>
<dbReference type="InterPro" id="IPR037224">
    <property type="entry name" value="PapC_N_sf"/>
</dbReference>
<dbReference type="PANTHER" id="PTHR30451">
    <property type="entry name" value="OUTER MEMBRANE USHER PROTEIN"/>
    <property type="match status" value="1"/>
</dbReference>
<dbReference type="PANTHER" id="PTHR30451:SF10">
    <property type="entry name" value="OUTER MEMBRANE USHER PROTEIN YFCU-RELATED"/>
    <property type="match status" value="1"/>
</dbReference>
<dbReference type="Pfam" id="PF13953">
    <property type="entry name" value="PapC_C"/>
    <property type="match status" value="1"/>
</dbReference>
<dbReference type="Pfam" id="PF13954">
    <property type="entry name" value="PapC_N"/>
    <property type="match status" value="1"/>
</dbReference>
<dbReference type="Pfam" id="PF00577">
    <property type="entry name" value="Usher"/>
    <property type="match status" value="1"/>
</dbReference>
<dbReference type="SUPFAM" id="SSF141729">
    <property type="entry name" value="FimD N-terminal domain-like"/>
    <property type="match status" value="1"/>
</dbReference>
<dbReference type="PROSITE" id="PS01151">
    <property type="entry name" value="FIMBRIAL_USHER"/>
    <property type="match status" value="1"/>
</dbReference>